<name>MEIS3_MOUSE</name>
<protein>
    <recommendedName>
        <fullName>Homeobox protein Meis3</fullName>
    </recommendedName>
    <alternativeName>
        <fullName>Meis1-related protein 2</fullName>
    </alternativeName>
</protein>
<reference key="1">
    <citation type="journal article" date="1996" name="Oncogene">
        <title>Identification of a new family of Pbx-related homeobox genes.</title>
        <authorList>
            <person name="Nakamura T."/>
            <person name="Jenkins N.A."/>
            <person name="Copeland N.G."/>
        </authorList>
    </citation>
    <scope>NUCLEOTIDE SEQUENCE [MRNA] (ISOFORM 1)</scope>
    <source>
        <strain>Swiss Webster</strain>
    </source>
</reference>
<reference key="2">
    <citation type="submission" date="2005-09" db="EMBL/GenBank/DDBJ databases">
        <authorList>
            <person name="Mural R.J."/>
            <person name="Adams M.D."/>
            <person name="Myers E.W."/>
            <person name="Smith H.O."/>
            <person name="Venter J.C."/>
        </authorList>
    </citation>
    <scope>NUCLEOTIDE SEQUENCE [LARGE SCALE GENOMIC DNA]</scope>
</reference>
<reference key="3">
    <citation type="journal article" date="2004" name="Genome Res.">
        <title>The status, quality, and expansion of the NIH full-length cDNA project: the Mammalian Gene Collection (MGC).</title>
        <authorList>
            <consortium name="The MGC Project Team"/>
        </authorList>
    </citation>
    <scope>NUCLEOTIDE SEQUENCE [LARGE SCALE MRNA] (ISOFORM 2)</scope>
    <source>
        <strain>FVB/N</strain>
        <tissue>Mammary gland</tissue>
    </source>
</reference>
<reference key="4">
    <citation type="journal article" date="2010" name="Proc. Natl. Acad. Sci. U.S.A.">
        <title>Three-amino-acid-loop-extension homeodomain factor Meis3 regulates cell survival via PDK1.</title>
        <authorList>
            <person name="Liu J."/>
            <person name="Wang Y."/>
            <person name="Birnbaum M.J."/>
            <person name="Stoffers D.A."/>
        </authorList>
    </citation>
    <scope>FUNCTION</scope>
    <scope>SUBCELLULAR LOCATION</scope>
    <scope>TISSUE SPECIFICITY</scope>
</reference>
<sequence length="378" mass="41726">MARRYDELRHYPGITEHTTALASFSEAAPSVPRAPGPYTPHRPPQLQAPGLDSDSLKREKDDIYGHPLFPLLALVFEKCELATCSPRDGASAGLGSPPGGDVCSSDSFNEDIAAFAKQIRSERPLFSSNPELDNLMVQAIQVLRFHLLELEKVHDLCDNFCHRYITCLKGKMPIDLVIEDRDGSCREDLEDYAASCPSLPDQNTTWIRDHEDSGSVHLGTPGPSSGGLASQSGDNSSDQGDGLDTSVASPSSAGEDEDLDLERRRNKKRGIFPKVATNIMRAWLFQHLSHPYPSEEQKKQLAQDTGLTILQVNNWFINARRRIVQPMIDQSNRTGQGASFNPEGQPMAGFTETQPQVTVRTPGSMGMNLNLEGEWHYL</sequence>
<feature type="chain" id="PRO_0000049111" description="Homeobox protein Meis3">
    <location>
        <begin position="1"/>
        <end position="378"/>
    </location>
</feature>
<feature type="domain" description="MEIS N-terminal" evidence="1">
    <location>
        <begin position="99"/>
        <end position="182"/>
    </location>
</feature>
<feature type="DNA-binding region" description="Homeobox; TALE-type" evidence="2">
    <location>
        <begin position="265"/>
        <end position="327"/>
    </location>
</feature>
<feature type="region of interest" description="Disordered" evidence="3">
    <location>
        <begin position="24"/>
        <end position="57"/>
    </location>
</feature>
<feature type="region of interest" description="Disordered" evidence="3">
    <location>
        <begin position="203"/>
        <end position="265"/>
    </location>
</feature>
<feature type="compositionally biased region" description="Pro residues" evidence="3">
    <location>
        <begin position="32"/>
        <end position="43"/>
    </location>
</feature>
<feature type="compositionally biased region" description="Low complexity" evidence="3">
    <location>
        <begin position="230"/>
        <end position="244"/>
    </location>
</feature>
<feature type="splice variant" id="VSP_012894" description="In isoform 2." evidence="5">
    <location>
        <begin position="152"/>
        <end position="168"/>
    </location>
</feature>
<feature type="sequence conflict" description="In Ref. 3; AAH03762." evidence="6" ref="3">
    <original>T</original>
    <variation>M</variation>
    <location>
        <position position="18"/>
    </location>
</feature>
<feature type="sequence conflict" description="In Ref. 1; AAC52949." evidence="6" ref="1">
    <original>A</original>
    <variation>T</variation>
    <location>
        <position position="193"/>
    </location>
</feature>
<organism>
    <name type="scientific">Mus musculus</name>
    <name type="common">Mouse</name>
    <dbReference type="NCBI Taxonomy" id="10090"/>
    <lineage>
        <taxon>Eukaryota</taxon>
        <taxon>Metazoa</taxon>
        <taxon>Chordata</taxon>
        <taxon>Craniata</taxon>
        <taxon>Vertebrata</taxon>
        <taxon>Euteleostomi</taxon>
        <taxon>Mammalia</taxon>
        <taxon>Eutheria</taxon>
        <taxon>Euarchontoglires</taxon>
        <taxon>Glires</taxon>
        <taxon>Rodentia</taxon>
        <taxon>Myomorpha</taxon>
        <taxon>Muroidea</taxon>
        <taxon>Muridae</taxon>
        <taxon>Murinae</taxon>
        <taxon>Mus</taxon>
        <taxon>Mus</taxon>
    </lineage>
</organism>
<keyword id="KW-0025">Alternative splicing</keyword>
<keyword id="KW-0238">DNA-binding</keyword>
<keyword id="KW-0371">Homeobox</keyword>
<keyword id="KW-0539">Nucleus</keyword>
<keyword id="KW-1185">Reference proteome</keyword>
<dbReference type="EMBL" id="U57344">
    <property type="protein sequence ID" value="AAC52949.1"/>
    <property type="molecule type" value="mRNA"/>
</dbReference>
<dbReference type="EMBL" id="CH466654">
    <property type="protein sequence ID" value="EDL42107.1"/>
    <property type="molecule type" value="Genomic_DNA"/>
</dbReference>
<dbReference type="EMBL" id="BC003762">
    <property type="protein sequence ID" value="AAH03762.1"/>
    <property type="molecule type" value="mRNA"/>
</dbReference>
<dbReference type="EMBL" id="BC117532">
    <property type="protein sequence ID" value="AAI17533.1"/>
    <property type="molecule type" value="mRNA"/>
</dbReference>
<dbReference type="CCDS" id="CCDS39782.1">
    <molecule id="P97368-1"/>
</dbReference>
<dbReference type="CCDS" id="CCDS71892.1">
    <molecule id="P97368-2"/>
</dbReference>
<dbReference type="RefSeq" id="NP_001264917.1">
    <molecule id="P97368-2"/>
    <property type="nucleotide sequence ID" value="NM_001277988.3"/>
</dbReference>
<dbReference type="RefSeq" id="NP_001264918.1">
    <molecule id="P97368-2"/>
    <property type="nucleotide sequence ID" value="NM_001277989.3"/>
</dbReference>
<dbReference type="RefSeq" id="NP_001289401.1">
    <molecule id="P97368-1"/>
    <property type="nucleotide sequence ID" value="NM_001302472.2"/>
</dbReference>
<dbReference type="RefSeq" id="NP_032653.2">
    <molecule id="P97368-1"/>
    <property type="nucleotide sequence ID" value="NM_008627.5"/>
</dbReference>
<dbReference type="RefSeq" id="XP_006539666.1">
    <molecule id="P97368-1"/>
    <property type="nucleotide sequence ID" value="XM_006539603.5"/>
</dbReference>
<dbReference type="RefSeq" id="XP_030098054.1">
    <molecule id="P97368-1"/>
    <property type="nucleotide sequence ID" value="XM_030242194.2"/>
</dbReference>
<dbReference type="RefSeq" id="XP_030098055.1">
    <molecule id="P97368-2"/>
    <property type="nucleotide sequence ID" value="XM_030242195.2"/>
</dbReference>
<dbReference type="RefSeq" id="XP_036008640.1">
    <molecule id="P97368-2"/>
    <property type="nucleotide sequence ID" value="XM_036152747.1"/>
</dbReference>
<dbReference type="SMR" id="P97368"/>
<dbReference type="BioGRID" id="201488">
    <property type="interactions" value="2"/>
</dbReference>
<dbReference type="FunCoup" id="P97368">
    <property type="interactions" value="741"/>
</dbReference>
<dbReference type="IntAct" id="P97368">
    <property type="interactions" value="3"/>
</dbReference>
<dbReference type="STRING" id="10090.ENSMUSP00000002495"/>
<dbReference type="PhosphoSitePlus" id="P97368"/>
<dbReference type="PaxDb" id="10090-ENSMUSP00000002495"/>
<dbReference type="Antibodypedia" id="31559">
    <property type="antibodies" value="438 antibodies from 25 providers"/>
</dbReference>
<dbReference type="DNASU" id="17537"/>
<dbReference type="Ensembl" id="ENSMUST00000002495.18">
    <molecule id="P97368-1"/>
    <property type="protein sequence ID" value="ENSMUSP00000002495.11"/>
    <property type="gene ID" value="ENSMUSG00000041420.19"/>
</dbReference>
<dbReference type="Ensembl" id="ENSMUST00000176506.8">
    <molecule id="P97368-2"/>
    <property type="protein sequence ID" value="ENSMUSP00000134918.2"/>
    <property type="gene ID" value="ENSMUSG00000041420.19"/>
</dbReference>
<dbReference type="GeneID" id="17537"/>
<dbReference type="KEGG" id="mmu:17537"/>
<dbReference type="UCSC" id="uc009fha.3">
    <molecule id="P97368-1"/>
    <property type="organism name" value="mouse"/>
</dbReference>
<dbReference type="UCSC" id="uc009fhd.3">
    <molecule id="P97368-2"/>
    <property type="organism name" value="mouse"/>
</dbReference>
<dbReference type="AGR" id="MGI:108519"/>
<dbReference type="CTD" id="56917"/>
<dbReference type="MGI" id="MGI:108519">
    <property type="gene designation" value="Meis3"/>
</dbReference>
<dbReference type="VEuPathDB" id="HostDB:ENSMUSG00000041420"/>
<dbReference type="eggNOG" id="KOG0773">
    <property type="taxonomic scope" value="Eukaryota"/>
</dbReference>
<dbReference type="GeneTree" id="ENSGT00940000161057"/>
<dbReference type="HOGENOM" id="CLU_023139_1_1_1"/>
<dbReference type="InParanoid" id="P97368"/>
<dbReference type="OMA" id="MEGEWHY"/>
<dbReference type="OrthoDB" id="10056939at2759"/>
<dbReference type="PhylomeDB" id="P97368"/>
<dbReference type="TreeFam" id="TF318093"/>
<dbReference type="BioGRID-ORCS" id="17537">
    <property type="hits" value="1 hit in 79 CRISPR screens"/>
</dbReference>
<dbReference type="ChiTaRS" id="Meis3">
    <property type="organism name" value="mouse"/>
</dbReference>
<dbReference type="PRO" id="PR:P97368"/>
<dbReference type="Proteomes" id="UP000000589">
    <property type="component" value="Chromosome 7"/>
</dbReference>
<dbReference type="RNAct" id="P97368">
    <property type="molecule type" value="protein"/>
</dbReference>
<dbReference type="Bgee" id="ENSMUSG00000041420">
    <property type="expression patterns" value="Expressed in cortical plate and 183 other cell types or tissues"/>
</dbReference>
<dbReference type="ExpressionAtlas" id="P97368">
    <property type="expression patterns" value="baseline and differential"/>
</dbReference>
<dbReference type="GO" id="GO:0005634">
    <property type="term" value="C:nucleus"/>
    <property type="evidence" value="ECO:0000314"/>
    <property type="project" value="MGI"/>
</dbReference>
<dbReference type="GO" id="GO:0003682">
    <property type="term" value="F:chromatin binding"/>
    <property type="evidence" value="ECO:0000314"/>
    <property type="project" value="MGI"/>
</dbReference>
<dbReference type="GO" id="GO:0001228">
    <property type="term" value="F:DNA-binding transcription activator activity, RNA polymerase II-specific"/>
    <property type="evidence" value="ECO:0000314"/>
    <property type="project" value="MGI"/>
</dbReference>
<dbReference type="GO" id="GO:0043565">
    <property type="term" value="F:sequence-specific DNA binding"/>
    <property type="evidence" value="ECO:0000266"/>
    <property type="project" value="MGI"/>
</dbReference>
<dbReference type="GO" id="GO:2001234">
    <property type="term" value="P:negative regulation of apoptotic signaling pathway"/>
    <property type="evidence" value="ECO:0000315"/>
    <property type="project" value="MGI"/>
</dbReference>
<dbReference type="GO" id="GO:0051897">
    <property type="term" value="P:positive regulation of phosphatidylinositol 3-kinase/protein kinase B signal transduction"/>
    <property type="evidence" value="ECO:0000315"/>
    <property type="project" value="MGI"/>
</dbReference>
<dbReference type="CDD" id="cd00086">
    <property type="entry name" value="homeodomain"/>
    <property type="match status" value="1"/>
</dbReference>
<dbReference type="FunFam" id="1.10.10.60:FF:000004">
    <property type="entry name" value="Meis2 homeobox isoform 2c"/>
    <property type="match status" value="1"/>
</dbReference>
<dbReference type="Gene3D" id="1.10.10.60">
    <property type="entry name" value="Homeodomain-like"/>
    <property type="match status" value="1"/>
</dbReference>
<dbReference type="InterPro" id="IPR001356">
    <property type="entry name" value="HD"/>
</dbReference>
<dbReference type="InterPro" id="IPR009057">
    <property type="entry name" value="Homeodomain-like_sf"/>
</dbReference>
<dbReference type="InterPro" id="IPR008422">
    <property type="entry name" value="KN_HD"/>
</dbReference>
<dbReference type="InterPro" id="IPR032453">
    <property type="entry name" value="PKNOX/Meis_N"/>
</dbReference>
<dbReference type="InterPro" id="IPR050224">
    <property type="entry name" value="TALE_homeobox"/>
</dbReference>
<dbReference type="PANTHER" id="PTHR11850">
    <property type="entry name" value="HOMEOBOX PROTEIN TRANSCRIPTION FACTORS"/>
    <property type="match status" value="1"/>
</dbReference>
<dbReference type="Pfam" id="PF05920">
    <property type="entry name" value="Homeobox_KN"/>
    <property type="match status" value="1"/>
</dbReference>
<dbReference type="Pfam" id="PF16493">
    <property type="entry name" value="Meis_PKNOX_N"/>
    <property type="match status" value="1"/>
</dbReference>
<dbReference type="SMART" id="SM00389">
    <property type="entry name" value="HOX"/>
    <property type="match status" value="1"/>
</dbReference>
<dbReference type="SUPFAM" id="SSF46689">
    <property type="entry name" value="Homeodomain-like"/>
    <property type="match status" value="1"/>
</dbReference>
<dbReference type="PROSITE" id="PS50071">
    <property type="entry name" value="HOMEOBOX_2"/>
    <property type="match status" value="1"/>
</dbReference>
<evidence type="ECO:0000255" key="1"/>
<evidence type="ECO:0000255" key="2">
    <source>
        <dbReference type="PROSITE-ProRule" id="PRU00108"/>
    </source>
</evidence>
<evidence type="ECO:0000256" key="3">
    <source>
        <dbReference type="SAM" id="MobiDB-lite"/>
    </source>
</evidence>
<evidence type="ECO:0000269" key="4">
    <source>
    </source>
</evidence>
<evidence type="ECO:0000303" key="5">
    <source>
    </source>
</evidence>
<evidence type="ECO:0000305" key="6"/>
<accession>P97368</accession>
<accession>Q149R5</accession>
<accession>Q99L81</accession>
<comment type="function">
    <text evidence="4">Transcriptional regulator which directly modulates PDPK1 expression, thus promoting survival of pancreatic beta-cells. Also regulates expression of NDFIP1, BNIP3, and CCNG1.</text>
</comment>
<comment type="subcellular location">
    <subcellularLocation>
        <location evidence="4">Nucleus</location>
    </subcellularLocation>
</comment>
<comment type="alternative products">
    <event type="alternative splicing"/>
    <isoform>
        <id>P97368-1</id>
        <name>1</name>
        <sequence type="displayed"/>
    </isoform>
    <isoform>
        <id>P97368-2</id>
        <name>2</name>
        <sequence type="described" ref="VSP_012894"/>
    </isoform>
</comment>
<comment type="tissue specificity">
    <text evidence="4">Expressed at high levels in the brain. Significant expression also observed in the heart, spleen and lung. Expressed in pancreatic islets (beta-cells and non-beta-cells) (PubMed:21059917).</text>
</comment>
<comment type="developmental stage">
    <text>Not expressed until 11 days in embryonic development.</text>
</comment>
<comment type="similarity">
    <text evidence="6">Belongs to the TALE/MEIS homeobox family.</text>
</comment>
<gene>
    <name type="primary">Meis3</name>
    <name type="synonym">Mrg2</name>
</gene>
<proteinExistence type="evidence at transcript level"/>